<dbReference type="EC" id="3.4.24.-"/>
<dbReference type="EMBL" id="DS480460">
    <property type="protein sequence ID" value="EDO15441.1"/>
    <property type="molecule type" value="Genomic_DNA"/>
</dbReference>
<dbReference type="RefSeq" id="XP_001643299.1">
    <property type="nucleotide sequence ID" value="XM_001643249.1"/>
</dbReference>
<dbReference type="FunCoup" id="A7TQM0">
    <property type="interactions" value="507"/>
</dbReference>
<dbReference type="STRING" id="436907.A7TQM0"/>
<dbReference type="MEROPS" id="M76.002"/>
<dbReference type="GeneID" id="5543524"/>
<dbReference type="KEGG" id="vpo:Kpol_1027p15"/>
<dbReference type="eggNOG" id="KOG3314">
    <property type="taxonomic scope" value="Eukaryota"/>
</dbReference>
<dbReference type="HOGENOM" id="CLU_079125_0_0_1"/>
<dbReference type="InParanoid" id="A7TQM0"/>
<dbReference type="OMA" id="EAHQNCV"/>
<dbReference type="OrthoDB" id="285308at2759"/>
<dbReference type="PhylomeDB" id="A7TQM0"/>
<dbReference type="Proteomes" id="UP000000267">
    <property type="component" value="Unassembled WGS sequence"/>
</dbReference>
<dbReference type="GO" id="GO:0005743">
    <property type="term" value="C:mitochondrial inner membrane"/>
    <property type="evidence" value="ECO:0007669"/>
    <property type="project" value="UniProtKB-SubCell"/>
</dbReference>
<dbReference type="GO" id="GO:0046872">
    <property type="term" value="F:metal ion binding"/>
    <property type="evidence" value="ECO:0007669"/>
    <property type="project" value="UniProtKB-KW"/>
</dbReference>
<dbReference type="GO" id="GO:0004222">
    <property type="term" value="F:metalloendopeptidase activity"/>
    <property type="evidence" value="ECO:0007669"/>
    <property type="project" value="InterPro"/>
</dbReference>
<dbReference type="GO" id="GO:0034982">
    <property type="term" value="P:mitochondrial protein processing"/>
    <property type="evidence" value="ECO:0007669"/>
    <property type="project" value="TreeGrafter"/>
</dbReference>
<dbReference type="GO" id="GO:0033615">
    <property type="term" value="P:mitochondrial proton-transporting ATP synthase complex assembly"/>
    <property type="evidence" value="ECO:0007669"/>
    <property type="project" value="TreeGrafter"/>
</dbReference>
<dbReference type="InterPro" id="IPR019165">
    <property type="entry name" value="Peptidase_M76_ATP23"/>
</dbReference>
<dbReference type="PANTHER" id="PTHR21711">
    <property type="entry name" value="MITOCHONDRIAL INNER MEMBRANE PROTEASE"/>
    <property type="match status" value="1"/>
</dbReference>
<dbReference type="PANTHER" id="PTHR21711:SF0">
    <property type="entry name" value="MITOCHONDRIAL INNER MEMBRANE PROTEASE ATP23 HOMOLOG"/>
    <property type="match status" value="1"/>
</dbReference>
<dbReference type="Pfam" id="PF09768">
    <property type="entry name" value="Peptidase_M76"/>
    <property type="match status" value="1"/>
</dbReference>
<dbReference type="PROSITE" id="PS00142">
    <property type="entry name" value="ZINC_PROTEASE"/>
    <property type="match status" value="1"/>
</dbReference>
<reference key="1">
    <citation type="journal article" date="2007" name="Proc. Natl. Acad. Sci. U.S.A.">
        <title>Independent sorting-out of thousands of duplicated gene pairs in two yeast species descended from a whole-genome duplication.</title>
        <authorList>
            <person name="Scannell D.R."/>
            <person name="Frank A.C."/>
            <person name="Conant G.C."/>
            <person name="Byrne K.P."/>
            <person name="Woolfit M."/>
            <person name="Wolfe K.H."/>
        </authorList>
    </citation>
    <scope>NUCLEOTIDE SEQUENCE [LARGE SCALE GENOMIC DNA]</scope>
    <source>
        <strain>ATCC 22028 / DSM 70294 / BCRC 21397 / CBS 2163 / NBRC 10782 / NRRL Y-8283 / UCD 57-17</strain>
    </source>
</reference>
<comment type="function">
    <text evidence="1">Has a dual role in the assembly of mitochondrial ATPase. Acts as a protease that removes N-terminal residues of mitochondrial ATPase CF(0) subunit 6 at the intermembrane space side. Also involved in the correct assembly of the membrane-embedded ATPase CF(0) particle, probably mediating association of subunit 6 with the subunit 9 ring (By similarity).</text>
</comment>
<comment type="subcellular location">
    <subcellularLocation>
        <location>Mitochondrion inner membrane</location>
        <topology>Peripheral membrane protein</topology>
        <orientation>Intermembrane side</orientation>
    </subcellularLocation>
    <text evidence="1">Associates loosely with the inner membrane.</text>
</comment>
<comment type="similarity">
    <text evidence="4">Belongs to the peptidase M76 family.</text>
</comment>
<gene>
    <name type="primary">ATP23</name>
    <name type="ORF">Kpol_1027p15</name>
</gene>
<sequence>MSKNADLEAIPAAEEIKKPNPPKEEASIKGFTWWRRTLQYNTGLGLSEDEKLNYENDYKYILERKQCKQCYEYKDWILKYSPTVTFMIQQIAKLSDGNPNIDGKNLKPFDESKIICDICPEWKSGGFHPDLGILICQNRIRNKWHLEDTLAHELVHQFDNLKWKVNWLNLKQHACSEIRASSLSGECRFGQEFARRGFGFKIANGHQECVKRRAILSVMGNPNCKDRAEAELVVNEVWDSCFNDTRPFEEIYR</sequence>
<evidence type="ECO:0000250" key="1"/>
<evidence type="ECO:0000255" key="2">
    <source>
        <dbReference type="PROSITE-ProRule" id="PRU10095"/>
    </source>
</evidence>
<evidence type="ECO:0000256" key="3">
    <source>
        <dbReference type="SAM" id="MobiDB-lite"/>
    </source>
</evidence>
<evidence type="ECO:0000305" key="4"/>
<name>ATP23_VANPO</name>
<proteinExistence type="inferred from homology"/>
<protein>
    <recommendedName>
        <fullName>Mitochondrial inner membrane protease ATP23</fullName>
        <ecNumber>3.4.24.-</ecNumber>
    </recommendedName>
</protein>
<keyword id="KW-0378">Hydrolase</keyword>
<keyword id="KW-0472">Membrane</keyword>
<keyword id="KW-0479">Metal-binding</keyword>
<keyword id="KW-0482">Metalloprotease</keyword>
<keyword id="KW-0496">Mitochondrion</keyword>
<keyword id="KW-0999">Mitochondrion inner membrane</keyword>
<keyword id="KW-0645">Protease</keyword>
<keyword id="KW-1185">Reference proteome</keyword>
<organism>
    <name type="scientific">Vanderwaltozyma polyspora (strain ATCC 22028 / DSM 70294 / BCRC 21397 / CBS 2163 / NBRC 10782 / NRRL Y-8283 / UCD 57-17)</name>
    <name type="common">Kluyveromyces polysporus</name>
    <dbReference type="NCBI Taxonomy" id="436907"/>
    <lineage>
        <taxon>Eukaryota</taxon>
        <taxon>Fungi</taxon>
        <taxon>Dikarya</taxon>
        <taxon>Ascomycota</taxon>
        <taxon>Saccharomycotina</taxon>
        <taxon>Saccharomycetes</taxon>
        <taxon>Saccharomycetales</taxon>
        <taxon>Saccharomycetaceae</taxon>
        <taxon>Vanderwaltozyma</taxon>
    </lineage>
</organism>
<feature type="chain" id="PRO_0000330076" description="Mitochondrial inner membrane protease ATP23">
    <location>
        <begin position="1"/>
        <end position="253"/>
    </location>
</feature>
<feature type="region of interest" description="Disordered" evidence="3">
    <location>
        <begin position="1"/>
        <end position="23"/>
    </location>
</feature>
<feature type="compositionally biased region" description="Basic and acidic residues" evidence="3">
    <location>
        <begin position="14"/>
        <end position="23"/>
    </location>
</feature>
<feature type="active site" evidence="2">
    <location>
        <position position="153"/>
    </location>
</feature>
<feature type="binding site" evidence="1">
    <location>
        <position position="152"/>
    </location>
    <ligand>
        <name>a divalent metal cation</name>
        <dbReference type="ChEBI" id="CHEBI:60240"/>
        <note>catalytic</note>
    </ligand>
</feature>
<feature type="binding site" evidence="1">
    <location>
        <position position="156"/>
    </location>
    <ligand>
        <name>a divalent metal cation</name>
        <dbReference type="ChEBI" id="CHEBI:60240"/>
        <note>catalytic</note>
    </ligand>
</feature>
<accession>A7TQM0</accession>